<geneLocation type="chloroplast"/>
<organism>
    <name type="scientific">Coelogyne cristata</name>
    <name type="common">Orchid</name>
    <name type="synonym">Cymbidium speciosissimum</name>
    <dbReference type="NCBI Taxonomy" id="38221"/>
    <lineage>
        <taxon>Eukaryota</taxon>
        <taxon>Viridiplantae</taxon>
        <taxon>Streptophyta</taxon>
        <taxon>Embryophyta</taxon>
        <taxon>Tracheophyta</taxon>
        <taxon>Spermatophyta</taxon>
        <taxon>Magnoliopsida</taxon>
        <taxon>Liliopsida</taxon>
        <taxon>Asparagales</taxon>
        <taxon>Orchidaceae</taxon>
        <taxon>Epidendroideae</taxon>
        <taxon>Arethuseae</taxon>
        <taxon>Coelogyninae</taxon>
        <taxon>Coelogyne</taxon>
    </lineage>
</organism>
<feature type="chain" id="PRO_0000124445" description="Small ribosomal subunit protein uS7c">
    <location>
        <begin position="1"/>
        <end position="155"/>
    </location>
</feature>
<reference key="1">
    <citation type="submission" date="2002-09" db="EMBL/GenBank/DDBJ databases">
        <title>Phylogenetic relationships among the major lineages of Asparagales based on a large chloroplast data set.</title>
        <authorList>
            <person name="McPherson M.A."/>
            <person name="Rai H.S."/>
            <person name="Wong W.A."/>
            <person name="Graham S.W."/>
        </authorList>
    </citation>
    <scope>NUCLEOTIDE SEQUENCE [GENOMIC DNA]</scope>
</reference>
<comment type="function">
    <text evidence="1">One of the primary rRNA binding proteins, it binds directly to 16S rRNA where it nucleates assembly of the head domain of the 30S subunit.</text>
</comment>
<comment type="subunit">
    <text>Part of the 30S ribosomal subunit.</text>
</comment>
<comment type="subcellular location">
    <subcellularLocation>
        <location>Plastid</location>
        <location>Chloroplast</location>
    </subcellularLocation>
</comment>
<comment type="similarity">
    <text evidence="2">Belongs to the universal ribosomal protein uS7 family.</text>
</comment>
<keyword id="KW-0150">Chloroplast</keyword>
<keyword id="KW-0934">Plastid</keyword>
<keyword id="KW-0687">Ribonucleoprotein</keyword>
<keyword id="KW-0689">Ribosomal protein</keyword>
<keyword id="KW-0694">RNA-binding</keyword>
<keyword id="KW-0699">rRNA-binding</keyword>
<gene>
    <name type="primary">rps7</name>
</gene>
<sequence>MSRRGTAEEKTAKSDPIYRNRLVNMLVNRILKHGKKSLAYQIIYRAVKKIQQKTETNPLSVLRQAIRGVTPDIAVKARRVGGSTHQVPIEIGSTQGKALAIRWLLGASRKRPGRNMAFQLSSELVDAAKGSGDAIRKKEETHRMAEANRAFAHFR</sequence>
<accession>Q67IG9</accession>
<proteinExistence type="inferred from homology"/>
<evidence type="ECO:0000250" key="1"/>
<evidence type="ECO:0000305" key="2"/>
<dbReference type="EMBL" id="AY147475">
    <property type="protein sequence ID" value="AAN32034.1"/>
    <property type="molecule type" value="Genomic_DNA"/>
</dbReference>
<dbReference type="SMR" id="Q67IG9"/>
<dbReference type="GO" id="GO:0009507">
    <property type="term" value="C:chloroplast"/>
    <property type="evidence" value="ECO:0007669"/>
    <property type="project" value="UniProtKB-SubCell"/>
</dbReference>
<dbReference type="GO" id="GO:0015935">
    <property type="term" value="C:small ribosomal subunit"/>
    <property type="evidence" value="ECO:0007669"/>
    <property type="project" value="InterPro"/>
</dbReference>
<dbReference type="GO" id="GO:0019843">
    <property type="term" value="F:rRNA binding"/>
    <property type="evidence" value="ECO:0007669"/>
    <property type="project" value="UniProtKB-UniRule"/>
</dbReference>
<dbReference type="GO" id="GO:0003735">
    <property type="term" value="F:structural constituent of ribosome"/>
    <property type="evidence" value="ECO:0007669"/>
    <property type="project" value="InterPro"/>
</dbReference>
<dbReference type="GO" id="GO:0006412">
    <property type="term" value="P:translation"/>
    <property type="evidence" value="ECO:0007669"/>
    <property type="project" value="UniProtKB-UniRule"/>
</dbReference>
<dbReference type="CDD" id="cd14871">
    <property type="entry name" value="uS7_Chloroplast"/>
    <property type="match status" value="1"/>
</dbReference>
<dbReference type="FunFam" id="1.10.455.10:FF:000001">
    <property type="entry name" value="30S ribosomal protein S7"/>
    <property type="match status" value="1"/>
</dbReference>
<dbReference type="Gene3D" id="1.10.455.10">
    <property type="entry name" value="Ribosomal protein S7 domain"/>
    <property type="match status" value="1"/>
</dbReference>
<dbReference type="HAMAP" id="MF_00480_B">
    <property type="entry name" value="Ribosomal_uS7_B"/>
    <property type="match status" value="1"/>
</dbReference>
<dbReference type="InterPro" id="IPR000235">
    <property type="entry name" value="Ribosomal_uS7"/>
</dbReference>
<dbReference type="InterPro" id="IPR005717">
    <property type="entry name" value="Ribosomal_uS7_bac/org-type"/>
</dbReference>
<dbReference type="InterPro" id="IPR020606">
    <property type="entry name" value="Ribosomal_uS7_CS"/>
</dbReference>
<dbReference type="InterPro" id="IPR023798">
    <property type="entry name" value="Ribosomal_uS7_dom"/>
</dbReference>
<dbReference type="InterPro" id="IPR036823">
    <property type="entry name" value="Ribosomal_uS7_dom_sf"/>
</dbReference>
<dbReference type="NCBIfam" id="TIGR01029">
    <property type="entry name" value="rpsG_bact"/>
    <property type="match status" value="1"/>
</dbReference>
<dbReference type="PANTHER" id="PTHR11205">
    <property type="entry name" value="RIBOSOMAL PROTEIN S7"/>
    <property type="match status" value="1"/>
</dbReference>
<dbReference type="Pfam" id="PF00177">
    <property type="entry name" value="Ribosomal_S7"/>
    <property type="match status" value="1"/>
</dbReference>
<dbReference type="PIRSF" id="PIRSF002122">
    <property type="entry name" value="RPS7p_RPS7a_RPS5e_RPS7o"/>
    <property type="match status" value="1"/>
</dbReference>
<dbReference type="SUPFAM" id="SSF47973">
    <property type="entry name" value="Ribosomal protein S7"/>
    <property type="match status" value="1"/>
</dbReference>
<dbReference type="PROSITE" id="PS00052">
    <property type="entry name" value="RIBOSOMAL_S7"/>
    <property type="match status" value="1"/>
</dbReference>
<name>RR7_COECR</name>
<protein>
    <recommendedName>
        <fullName evidence="2">Small ribosomal subunit protein uS7c</fullName>
    </recommendedName>
    <alternativeName>
        <fullName>30S ribosomal protein S7, chloroplastic</fullName>
    </alternativeName>
</protein>